<keyword id="KW-0002">3D-structure</keyword>
<keyword id="KW-0044">Antibiotic</keyword>
<keyword id="KW-0929">Antimicrobial</keyword>
<keyword id="KW-0078">Bacteriocin</keyword>
<keyword id="KW-0903">Direct protein sequencing</keyword>
<keyword id="KW-0379">Hydroxylation</keyword>
<keyword id="KW-0425">Lantibiotic</keyword>
<keyword id="KW-0883">Thioether bond</keyword>
<feature type="propeptide" id="PRO_0000017148" evidence="1">
    <location>
        <begin position="1"/>
        <end position="59"/>
    </location>
</feature>
<feature type="peptide" id="PRO_0000017149" description="Lantibiotic cinnamycin">
    <location>
        <begin position="60"/>
        <end position="78"/>
    </location>
</feature>
<feature type="modified residue" description="(3R)-3-hydroxyaspartate" evidence="2">
    <location>
        <position position="74"/>
    </location>
</feature>
<feature type="cross-link" description="Beta-methyllanthionine (Cys-Thr)">
    <location>
        <begin position="60"/>
        <end position="77"/>
    </location>
</feature>
<feature type="cross-link" description="Lanthionine (Ser-Cys)">
    <location>
        <begin position="63"/>
        <end position="73"/>
    </location>
</feature>
<feature type="cross-link" description="Beta-methyllanthionine (Cys-Thr)">
    <location>
        <begin position="64"/>
        <end position="70"/>
    </location>
</feature>
<feature type="cross-link" description="Lysinoalanine (Ser-Lys)">
    <location>
        <begin position="65"/>
        <end position="78"/>
    </location>
</feature>
<feature type="strand" evidence="4">
    <location>
        <begin position="65"/>
        <end position="72"/>
    </location>
</feature>
<name>CINA_STRGV</name>
<sequence length="78" mass="8205">MTASILQQSVVDADFRAALLENPAAFGASAAALPTPVEAQDQASLDFWTKDIAATEAFACRQSCSFGPFTFVCDGNTK</sequence>
<proteinExistence type="evidence at protein level"/>
<comment type="function">
    <text>Can act as inhibitor of the enzyme phospholipase A2, and of the angiotensin-converting enzyme. Shows inhibitory activities against herpes simplex virus and immunopotentiating activities. Its antimicrobial activities are not very pronounced.</text>
</comment>
<comment type="PTM">
    <text>Maturation of lantibiotics involves the enzymatic conversion of Thr, and Ser into dehydrated AA and the formation of thioether bonds with cysteine or the formation of dialkylamine bonds with lysine. This is followed by membrane translocation and cleavage of the modified precursor.</text>
</comment>
<comment type="similarity">
    <text evidence="3">Belongs to the type B lantibiotic family.</text>
</comment>
<reference key="1">
    <citation type="journal article" date="1991" name="Eur. J. Biochem.">
        <title>Prepeptide sequence of cinnamycin (Ro 09-0198): the first structural gene of a duramycin-type lantibiotic.</title>
        <authorList>
            <person name="Kaletta C."/>
            <person name="Entian K.-D."/>
            <person name="Jung G."/>
        </authorList>
    </citation>
    <scope>NUCLEOTIDE SEQUENCE [GENOMIC DNA]</scope>
    <source>
        <strain>MAR 164C-MY6</strain>
    </source>
</reference>
<reference key="2">
    <citation type="journal article" date="1990" name="J. Antibiot.">
        <title>Duramycins B and C, two new lanthionine containing antibiotics as inhibitors of phospholipase A2. Structural revision of duramycin and cinnamycin.</title>
        <authorList>
            <person name="Fredenhagen A."/>
            <person name="Fendrich G."/>
            <person name="Marki F."/>
            <person name="Marki W."/>
            <person name="Gruner J."/>
            <person name="Raschdorf F."/>
            <person name="Peter H.H."/>
        </authorList>
    </citation>
    <scope>PROTEIN SEQUENCE OF 60-78</scope>
</reference>
<reference key="3">
    <citation type="journal article" date="1989" name="J. Antibiot.">
        <title>Lanthiopeptin, a new peptide antibiotic. Production, isolation and properties of lanthiopeptin.</title>
        <authorList>
            <person name="Naruse N."/>
            <person name="Tenmyo O."/>
            <person name="Tomita K."/>
            <person name="Konishi M."/>
            <person name="Miyaki T."/>
            <person name="Kawaguchi H."/>
            <person name="Fukase K."/>
            <person name="Wakamiya T."/>
            <person name="Shiba T."/>
        </authorList>
    </citation>
    <scope>PROTEIN SEQUENCE OF 60-78</scope>
    <scope>HYDROXYLATION AT ASP-74</scope>
</reference>
<organism>
    <name type="scientific">Streptomyces griseoverticillatus</name>
    <name type="common">Streptoverticillium griseoverticillatum</name>
    <dbReference type="NCBI Taxonomy" id="68215"/>
    <lineage>
        <taxon>Bacteria</taxon>
        <taxon>Bacillati</taxon>
        <taxon>Actinomycetota</taxon>
        <taxon>Actinomycetes</taxon>
        <taxon>Kitasatosporales</taxon>
        <taxon>Streptomycetaceae</taxon>
        <taxon>Streptomyces</taxon>
        <taxon>Streptomyces cinnamoneus group</taxon>
    </lineage>
</organism>
<accession>P29827</accession>
<evidence type="ECO:0000255" key="1"/>
<evidence type="ECO:0000269" key="2">
    <source>
    </source>
</evidence>
<evidence type="ECO:0000305" key="3"/>
<evidence type="ECO:0007829" key="4">
    <source>
        <dbReference type="PDB" id="2DDE"/>
    </source>
</evidence>
<protein>
    <recommendedName>
        <fullName>Lantibiotic cinnamycin</fullName>
    </recommendedName>
    <alternativeName>
        <fullName>Lanthiopeptin</fullName>
    </alternativeName>
    <alternativeName>
        <fullName>Lantibiotic Ro 09-0198</fullName>
    </alternativeName>
</protein>
<gene>
    <name type="primary">cinA</name>
    <name type="synonym">rocA</name>
</gene>
<dbReference type="EMBL" id="X58545">
    <property type="protein sequence ID" value="CAA41436.1"/>
    <property type="molecule type" value="Genomic_DNA"/>
</dbReference>
<dbReference type="PIR" id="A45767">
    <property type="entry name" value="EWSMCN"/>
</dbReference>
<dbReference type="PIR" id="S17181">
    <property type="entry name" value="EWSMYG"/>
</dbReference>
<dbReference type="PDB" id="2DDE">
    <property type="method" value="NMR"/>
    <property type="chains" value="A=60-78"/>
</dbReference>
<dbReference type="PDBsum" id="2DDE"/>
<dbReference type="SMR" id="P29827"/>
<dbReference type="DrugBank" id="DB04731">
    <property type="generic name" value="1-ACETYL-2-LYSO-SN-GLYCERO-3-PHOSPHOETHANOLAMINE"/>
</dbReference>
<dbReference type="GO" id="GO:0005102">
    <property type="term" value="F:signaling receptor binding"/>
    <property type="evidence" value="ECO:0007669"/>
    <property type="project" value="UniProtKB-KW"/>
</dbReference>
<dbReference type="GO" id="GO:0042742">
    <property type="term" value="P:defense response to bacterium"/>
    <property type="evidence" value="ECO:0007669"/>
    <property type="project" value="UniProtKB-KW"/>
</dbReference>
<dbReference type="GO" id="GO:0031640">
    <property type="term" value="P:killing of cells of another organism"/>
    <property type="evidence" value="ECO:0007669"/>
    <property type="project" value="UniProtKB-KW"/>
</dbReference>
<dbReference type="InterPro" id="IPR048275">
    <property type="entry name" value="Cinnamycin_RiPP"/>
</dbReference>
<dbReference type="InterPro" id="IPR046016">
    <property type="entry name" value="Dur/DurB-like"/>
</dbReference>
<dbReference type="NCBIfam" id="NF033431">
    <property type="entry name" value="cinnamycin_RiPP"/>
    <property type="match status" value="1"/>
</dbReference>
<dbReference type="Pfam" id="PF19398">
    <property type="entry name" value="DurB-like"/>
    <property type="match status" value="1"/>
</dbReference>